<dbReference type="EMBL" id="CP000013">
    <property type="protein sequence ID" value="AAU07239.1"/>
    <property type="molecule type" value="Genomic_DNA"/>
</dbReference>
<dbReference type="RefSeq" id="WP_011193713.1">
    <property type="nucleotide sequence ID" value="NZ_CP028872.1"/>
</dbReference>
<dbReference type="SMR" id="Q661N2"/>
<dbReference type="GeneID" id="45161174"/>
<dbReference type="KEGG" id="bga:BG0387"/>
<dbReference type="eggNOG" id="COG0049">
    <property type="taxonomic scope" value="Bacteria"/>
</dbReference>
<dbReference type="HOGENOM" id="CLU_072226_1_1_12"/>
<dbReference type="OrthoDB" id="9807653at2"/>
<dbReference type="Proteomes" id="UP000002276">
    <property type="component" value="Chromosome"/>
</dbReference>
<dbReference type="GO" id="GO:0015935">
    <property type="term" value="C:small ribosomal subunit"/>
    <property type="evidence" value="ECO:0007669"/>
    <property type="project" value="InterPro"/>
</dbReference>
<dbReference type="GO" id="GO:0019843">
    <property type="term" value="F:rRNA binding"/>
    <property type="evidence" value="ECO:0007669"/>
    <property type="project" value="UniProtKB-UniRule"/>
</dbReference>
<dbReference type="GO" id="GO:0003735">
    <property type="term" value="F:structural constituent of ribosome"/>
    <property type="evidence" value="ECO:0007669"/>
    <property type="project" value="InterPro"/>
</dbReference>
<dbReference type="GO" id="GO:0000049">
    <property type="term" value="F:tRNA binding"/>
    <property type="evidence" value="ECO:0007669"/>
    <property type="project" value="UniProtKB-UniRule"/>
</dbReference>
<dbReference type="GO" id="GO:0006412">
    <property type="term" value="P:translation"/>
    <property type="evidence" value="ECO:0007669"/>
    <property type="project" value="UniProtKB-UniRule"/>
</dbReference>
<dbReference type="CDD" id="cd14869">
    <property type="entry name" value="uS7_Bacteria"/>
    <property type="match status" value="1"/>
</dbReference>
<dbReference type="FunFam" id="1.10.455.10:FF:000001">
    <property type="entry name" value="30S ribosomal protein S7"/>
    <property type="match status" value="1"/>
</dbReference>
<dbReference type="Gene3D" id="1.10.455.10">
    <property type="entry name" value="Ribosomal protein S7 domain"/>
    <property type="match status" value="1"/>
</dbReference>
<dbReference type="HAMAP" id="MF_00480_B">
    <property type="entry name" value="Ribosomal_uS7_B"/>
    <property type="match status" value="1"/>
</dbReference>
<dbReference type="InterPro" id="IPR000235">
    <property type="entry name" value="Ribosomal_uS7"/>
</dbReference>
<dbReference type="InterPro" id="IPR005717">
    <property type="entry name" value="Ribosomal_uS7_bac/org-type"/>
</dbReference>
<dbReference type="InterPro" id="IPR020606">
    <property type="entry name" value="Ribosomal_uS7_CS"/>
</dbReference>
<dbReference type="InterPro" id="IPR023798">
    <property type="entry name" value="Ribosomal_uS7_dom"/>
</dbReference>
<dbReference type="InterPro" id="IPR036823">
    <property type="entry name" value="Ribosomal_uS7_dom_sf"/>
</dbReference>
<dbReference type="NCBIfam" id="TIGR01029">
    <property type="entry name" value="rpsG_bact"/>
    <property type="match status" value="1"/>
</dbReference>
<dbReference type="PANTHER" id="PTHR11205">
    <property type="entry name" value="RIBOSOMAL PROTEIN S7"/>
    <property type="match status" value="1"/>
</dbReference>
<dbReference type="Pfam" id="PF00177">
    <property type="entry name" value="Ribosomal_S7"/>
    <property type="match status" value="1"/>
</dbReference>
<dbReference type="PIRSF" id="PIRSF002122">
    <property type="entry name" value="RPS7p_RPS7a_RPS5e_RPS7o"/>
    <property type="match status" value="1"/>
</dbReference>
<dbReference type="SUPFAM" id="SSF47973">
    <property type="entry name" value="Ribosomal protein S7"/>
    <property type="match status" value="1"/>
</dbReference>
<dbReference type="PROSITE" id="PS00052">
    <property type="entry name" value="RIBOSOMAL_S7"/>
    <property type="match status" value="1"/>
</dbReference>
<name>RS7_BORGP</name>
<reference key="1">
    <citation type="journal article" date="2004" name="Nucleic Acids Res.">
        <title>Comparative analysis of the Borrelia garinii genome.</title>
        <authorList>
            <person name="Gloeckner G."/>
            <person name="Lehmann R."/>
            <person name="Romualdi A."/>
            <person name="Pradella S."/>
            <person name="Schulte-Spechtel U."/>
            <person name="Schilhabel M."/>
            <person name="Wilske B."/>
            <person name="Suehnel J."/>
            <person name="Platzer M."/>
        </authorList>
    </citation>
    <scope>NUCLEOTIDE SEQUENCE [LARGE SCALE GENOMIC DNA]</scope>
    <source>
        <strain>ATCC BAA-2496 / DSM 23469 / PBi</strain>
    </source>
</reference>
<comment type="function">
    <text evidence="1">One of the primary rRNA binding proteins, it binds directly to 16S rRNA where it nucleates assembly of the head domain of the 30S subunit. Is located at the subunit interface close to the decoding center, probably blocks exit of the E-site tRNA.</text>
</comment>
<comment type="subunit">
    <text evidence="1">Part of the 30S ribosomal subunit. Contacts proteins S9 and S11.</text>
</comment>
<comment type="similarity">
    <text evidence="1">Belongs to the universal ribosomal protein uS7 family.</text>
</comment>
<feature type="chain" id="PRO_0000124227" description="Small ribosomal subunit protein uS7">
    <location>
        <begin position="1"/>
        <end position="157"/>
    </location>
</feature>
<gene>
    <name evidence="1" type="primary">rpsG</name>
    <name type="ordered locus">BG0387</name>
</gene>
<protein>
    <recommendedName>
        <fullName evidence="1">Small ribosomal subunit protein uS7</fullName>
    </recommendedName>
    <alternativeName>
        <fullName evidence="2">30S ribosomal protein S7</fullName>
    </alternativeName>
</protein>
<sequence length="157" mass="18266">MSRKNKKIKKKIFIDTRYNSRIVAKFANRMMYDGKKSISESILYSSIDLLADKLEDSDKMAVFYKALDNIKPLVEVRSRRVGGATYQVPVEVREERREALAMKWIIFAARKSSGRSMKEKLSNELLNAYNSTGAAFKKKEDTHRMAEANKAFTHYRW</sequence>
<proteinExistence type="inferred from homology"/>
<keyword id="KW-0687">Ribonucleoprotein</keyword>
<keyword id="KW-0689">Ribosomal protein</keyword>
<keyword id="KW-0694">RNA-binding</keyword>
<keyword id="KW-0699">rRNA-binding</keyword>
<keyword id="KW-0820">tRNA-binding</keyword>
<evidence type="ECO:0000255" key="1">
    <source>
        <dbReference type="HAMAP-Rule" id="MF_00480"/>
    </source>
</evidence>
<evidence type="ECO:0000305" key="2"/>
<accession>Q661N2</accession>
<organism>
    <name type="scientific">Borrelia garinii subsp. bavariensis (strain ATCC BAA-2496 / DSM 23469 / PBi)</name>
    <name type="common">Borreliella bavariensis</name>
    <dbReference type="NCBI Taxonomy" id="290434"/>
    <lineage>
        <taxon>Bacteria</taxon>
        <taxon>Pseudomonadati</taxon>
        <taxon>Spirochaetota</taxon>
        <taxon>Spirochaetia</taxon>
        <taxon>Spirochaetales</taxon>
        <taxon>Borreliaceae</taxon>
        <taxon>Borreliella</taxon>
    </lineage>
</organism>